<accession>B0BTZ2</accession>
<comment type="function">
    <text evidence="1">Required for nucleoid occlusion (NO) phenomenon, which prevents Z-ring formation and cell division over the nucleoid. Acts as a DNA-associated cell division inhibitor that binds simultaneously chromosomal DNA and FtsZ, and disrupts the assembly of FtsZ polymers. SlmA-DNA-binding sequences (SBS) are dispersed on non-Ter regions of the chromosome, preventing FtsZ polymerization at these regions.</text>
</comment>
<comment type="subunit">
    <text evidence="1">Homodimer. Interacts with FtsZ.</text>
</comment>
<comment type="subcellular location">
    <subcellularLocation>
        <location evidence="1">Cytoplasm</location>
        <location evidence="1">Nucleoid</location>
    </subcellularLocation>
</comment>
<comment type="similarity">
    <text evidence="1">Belongs to the nucleoid occlusion factor SlmA family.</text>
</comment>
<reference key="1">
    <citation type="journal article" date="2008" name="PLoS ONE">
        <title>Genome biology of Actinobacillus pleuropneumoniae JL03, an isolate of serotype 3 prevalent in China.</title>
        <authorList>
            <person name="Xu Z."/>
            <person name="Zhou Y."/>
            <person name="Li L."/>
            <person name="Zhou R."/>
            <person name="Xiao S."/>
            <person name="Wan Y."/>
            <person name="Zhang S."/>
            <person name="Wang K."/>
            <person name="Li W."/>
            <person name="Li L."/>
            <person name="Jin H."/>
            <person name="Kang M."/>
            <person name="Dalai B."/>
            <person name="Li T."/>
            <person name="Liu L."/>
            <person name="Cheng Y."/>
            <person name="Zhang L."/>
            <person name="Xu T."/>
            <person name="Zheng H."/>
            <person name="Pu S."/>
            <person name="Wang B."/>
            <person name="Gu W."/>
            <person name="Zhang X.L."/>
            <person name="Zhu G.-F."/>
            <person name="Wang S."/>
            <person name="Zhao G.-P."/>
            <person name="Chen H."/>
        </authorList>
    </citation>
    <scope>NUCLEOTIDE SEQUENCE [LARGE SCALE GENOMIC DNA]</scope>
    <source>
        <strain>JL03</strain>
    </source>
</reference>
<feature type="chain" id="PRO_1000188377" description="Nucleoid occlusion factor SlmA">
    <location>
        <begin position="1"/>
        <end position="202"/>
    </location>
</feature>
<feature type="domain" description="HTH tetR-type" evidence="1">
    <location>
        <begin position="14"/>
        <end position="75"/>
    </location>
</feature>
<feature type="DNA-binding region" description="H-T-H motif" evidence="1">
    <location>
        <begin position="38"/>
        <end position="57"/>
    </location>
</feature>
<keyword id="KW-0131">Cell cycle</keyword>
<keyword id="KW-0132">Cell division</keyword>
<keyword id="KW-0963">Cytoplasm</keyword>
<keyword id="KW-0238">DNA-binding</keyword>
<name>SLMA_ACTPJ</name>
<dbReference type="EMBL" id="CP000687">
    <property type="protein sequence ID" value="ABY70559.1"/>
    <property type="molecule type" value="Genomic_DNA"/>
</dbReference>
<dbReference type="RefSeq" id="WP_005620316.1">
    <property type="nucleotide sequence ID" value="NC_010278.1"/>
</dbReference>
<dbReference type="SMR" id="B0BTZ2"/>
<dbReference type="GeneID" id="48600268"/>
<dbReference type="KEGG" id="apj:APJL_2014"/>
<dbReference type="HOGENOM" id="CLU_069356_5_0_6"/>
<dbReference type="Proteomes" id="UP000008547">
    <property type="component" value="Chromosome"/>
</dbReference>
<dbReference type="GO" id="GO:0043590">
    <property type="term" value="C:bacterial nucleoid"/>
    <property type="evidence" value="ECO:0007669"/>
    <property type="project" value="UniProtKB-UniRule"/>
</dbReference>
<dbReference type="GO" id="GO:0005737">
    <property type="term" value="C:cytoplasm"/>
    <property type="evidence" value="ECO:0007669"/>
    <property type="project" value="UniProtKB-UniRule"/>
</dbReference>
<dbReference type="GO" id="GO:0043565">
    <property type="term" value="F:sequence-specific DNA binding"/>
    <property type="evidence" value="ECO:0007669"/>
    <property type="project" value="UniProtKB-UniRule"/>
</dbReference>
<dbReference type="GO" id="GO:0051301">
    <property type="term" value="P:cell division"/>
    <property type="evidence" value="ECO:0007669"/>
    <property type="project" value="UniProtKB-KW"/>
</dbReference>
<dbReference type="GO" id="GO:0010974">
    <property type="term" value="P:negative regulation of division septum assembly"/>
    <property type="evidence" value="ECO:0007669"/>
    <property type="project" value="InterPro"/>
</dbReference>
<dbReference type="Gene3D" id="1.10.357.10">
    <property type="entry name" value="Tetracycline Repressor, domain 2"/>
    <property type="match status" value="1"/>
</dbReference>
<dbReference type="HAMAP" id="MF_01839">
    <property type="entry name" value="NO_factor_SlmA"/>
    <property type="match status" value="1"/>
</dbReference>
<dbReference type="InterPro" id="IPR023772">
    <property type="entry name" value="DNA-bd_HTH_TetR-type_CS"/>
</dbReference>
<dbReference type="InterPro" id="IPR009057">
    <property type="entry name" value="Homeodomain-like_sf"/>
</dbReference>
<dbReference type="InterPro" id="IPR050624">
    <property type="entry name" value="HTH-type_Tx_Regulator"/>
</dbReference>
<dbReference type="InterPro" id="IPR001647">
    <property type="entry name" value="HTH_TetR"/>
</dbReference>
<dbReference type="InterPro" id="IPR023769">
    <property type="entry name" value="NO_SlmA"/>
</dbReference>
<dbReference type="InterPro" id="IPR054580">
    <property type="entry name" value="SlmA-like_C"/>
</dbReference>
<dbReference type="NCBIfam" id="NF007015">
    <property type="entry name" value="PRK09480.1"/>
    <property type="match status" value="1"/>
</dbReference>
<dbReference type="PANTHER" id="PTHR43479">
    <property type="entry name" value="ACREF/ENVCD OPERON REPRESSOR-RELATED"/>
    <property type="match status" value="1"/>
</dbReference>
<dbReference type="PANTHER" id="PTHR43479:SF11">
    <property type="entry name" value="ACREF_ENVCD OPERON REPRESSOR-RELATED"/>
    <property type="match status" value="1"/>
</dbReference>
<dbReference type="Pfam" id="PF22276">
    <property type="entry name" value="SlmA-like_C"/>
    <property type="match status" value="1"/>
</dbReference>
<dbReference type="Pfam" id="PF00440">
    <property type="entry name" value="TetR_N"/>
    <property type="match status" value="1"/>
</dbReference>
<dbReference type="SUPFAM" id="SSF46689">
    <property type="entry name" value="Homeodomain-like"/>
    <property type="match status" value="1"/>
</dbReference>
<dbReference type="PROSITE" id="PS01081">
    <property type="entry name" value="HTH_TETR_1"/>
    <property type="match status" value="1"/>
</dbReference>
<dbReference type="PROSITE" id="PS50977">
    <property type="entry name" value="HTH_TETR_2"/>
    <property type="match status" value="1"/>
</dbReference>
<gene>
    <name evidence="1" type="primary">slmA</name>
    <name type="ordered locus">APJL_2014</name>
</gene>
<protein>
    <recommendedName>
        <fullName evidence="1">Nucleoid occlusion factor SlmA</fullName>
    </recommendedName>
</protein>
<proteinExistence type="inferred from homology"/>
<sequence>MIQPTVKMPKKSVKERQQQVLEVLIGLLNSEDGMQRVTTERLAKAVGVSEGALYRYFPSKTKMFEALIERIEQTLTGYINASKRKENTTASTVKAILYTVIEFARKNPGVTRILTGHALMFEDDQLKARVAKFFDGLEFQFANILQMSKLREGKTFEDERALAGYLVNFCEGQFLRLVRSNFSYNQHQHFEKQWALIKPLFE</sequence>
<organism>
    <name type="scientific">Actinobacillus pleuropneumoniae serotype 3 (strain JL03)</name>
    <dbReference type="NCBI Taxonomy" id="434271"/>
    <lineage>
        <taxon>Bacteria</taxon>
        <taxon>Pseudomonadati</taxon>
        <taxon>Pseudomonadota</taxon>
        <taxon>Gammaproteobacteria</taxon>
        <taxon>Pasteurellales</taxon>
        <taxon>Pasteurellaceae</taxon>
        <taxon>Actinobacillus</taxon>
    </lineage>
</organism>
<evidence type="ECO:0000255" key="1">
    <source>
        <dbReference type="HAMAP-Rule" id="MF_01839"/>
    </source>
</evidence>